<gene>
    <name evidence="1" type="primary">xpt</name>
    <name type="ordered locus">BCE33L1448</name>
</gene>
<proteinExistence type="inferred from homology"/>
<accession>Q63DG7</accession>
<sequence length="197" mass="21605">MKVLQEKILNEGKVLSGDVLKVDAFLNHQIDPVLMQEIGKEFAKRFKEENITKIVTIESSGIAPAVMAALELGVKVIFARKRKSLTLQDNMYVASVYSFTKQETNEISLSRNHIDESDRVLIIDDFLANGQAALGLMSLVEQAGASIAGIGIVIEKAFQDGGKKLREQGIRVESLAEIASLDNNAVTFVQQETAEVK</sequence>
<keyword id="KW-0963">Cytoplasm</keyword>
<keyword id="KW-0328">Glycosyltransferase</keyword>
<keyword id="KW-0660">Purine salvage</keyword>
<keyword id="KW-0808">Transferase</keyword>
<feature type="chain" id="PRO_0000339662" description="Xanthine phosphoribosyltransferase">
    <location>
        <begin position="1"/>
        <end position="197"/>
    </location>
</feature>
<feature type="binding site" evidence="1">
    <location>
        <position position="20"/>
    </location>
    <ligand>
        <name>xanthine</name>
        <dbReference type="ChEBI" id="CHEBI:17712"/>
    </ligand>
</feature>
<feature type="binding site" evidence="1">
    <location>
        <position position="27"/>
    </location>
    <ligand>
        <name>xanthine</name>
        <dbReference type="ChEBI" id="CHEBI:17712"/>
    </ligand>
</feature>
<feature type="binding site" evidence="1">
    <location>
        <begin position="128"/>
        <end position="132"/>
    </location>
    <ligand>
        <name>5-phospho-alpha-D-ribose 1-diphosphate</name>
        <dbReference type="ChEBI" id="CHEBI:58017"/>
    </ligand>
</feature>
<feature type="binding site" evidence="1">
    <location>
        <position position="156"/>
    </location>
    <ligand>
        <name>xanthine</name>
        <dbReference type="ChEBI" id="CHEBI:17712"/>
    </ligand>
</feature>
<comment type="function">
    <text evidence="1">Converts the preformed base xanthine, a product of nucleic acid breakdown, to xanthosine 5'-monophosphate (XMP), so it can be reused for RNA or DNA synthesis.</text>
</comment>
<comment type="catalytic activity">
    <reaction evidence="1">
        <text>XMP + diphosphate = xanthine + 5-phospho-alpha-D-ribose 1-diphosphate</text>
        <dbReference type="Rhea" id="RHEA:10800"/>
        <dbReference type="ChEBI" id="CHEBI:17712"/>
        <dbReference type="ChEBI" id="CHEBI:33019"/>
        <dbReference type="ChEBI" id="CHEBI:57464"/>
        <dbReference type="ChEBI" id="CHEBI:58017"/>
        <dbReference type="EC" id="2.4.2.22"/>
    </reaction>
</comment>
<comment type="pathway">
    <text evidence="1">Purine metabolism; XMP biosynthesis via salvage pathway; XMP from xanthine: step 1/1.</text>
</comment>
<comment type="subunit">
    <text evidence="1">Homodimer.</text>
</comment>
<comment type="subcellular location">
    <subcellularLocation>
        <location evidence="1">Cytoplasm</location>
    </subcellularLocation>
</comment>
<comment type="similarity">
    <text evidence="1">Belongs to the purine/pyrimidine phosphoribosyltransferase family. Xpt subfamily.</text>
</comment>
<evidence type="ECO:0000255" key="1">
    <source>
        <dbReference type="HAMAP-Rule" id="MF_01184"/>
    </source>
</evidence>
<reference key="1">
    <citation type="journal article" date="2006" name="J. Bacteriol.">
        <title>Pathogenomic sequence analysis of Bacillus cereus and Bacillus thuringiensis isolates closely related to Bacillus anthracis.</title>
        <authorList>
            <person name="Han C.S."/>
            <person name="Xie G."/>
            <person name="Challacombe J.F."/>
            <person name="Altherr M.R."/>
            <person name="Bhotika S.S."/>
            <person name="Bruce D."/>
            <person name="Campbell C.S."/>
            <person name="Campbell M.L."/>
            <person name="Chen J."/>
            <person name="Chertkov O."/>
            <person name="Cleland C."/>
            <person name="Dimitrijevic M."/>
            <person name="Doggett N.A."/>
            <person name="Fawcett J.J."/>
            <person name="Glavina T."/>
            <person name="Goodwin L.A."/>
            <person name="Hill K.K."/>
            <person name="Hitchcock P."/>
            <person name="Jackson P.J."/>
            <person name="Keim P."/>
            <person name="Kewalramani A.R."/>
            <person name="Longmire J."/>
            <person name="Lucas S."/>
            <person name="Malfatti S."/>
            <person name="McMurry K."/>
            <person name="Meincke L.J."/>
            <person name="Misra M."/>
            <person name="Moseman B.L."/>
            <person name="Mundt M."/>
            <person name="Munk A.C."/>
            <person name="Okinaka R.T."/>
            <person name="Parson-Quintana B."/>
            <person name="Reilly L.P."/>
            <person name="Richardson P."/>
            <person name="Robinson D.L."/>
            <person name="Rubin E."/>
            <person name="Saunders E."/>
            <person name="Tapia R."/>
            <person name="Tesmer J.G."/>
            <person name="Thayer N."/>
            <person name="Thompson L.S."/>
            <person name="Tice H."/>
            <person name="Ticknor L.O."/>
            <person name="Wills P.L."/>
            <person name="Brettin T.S."/>
            <person name="Gilna P."/>
        </authorList>
    </citation>
    <scope>NUCLEOTIDE SEQUENCE [LARGE SCALE GENOMIC DNA]</scope>
    <source>
        <strain>ZK / E33L</strain>
    </source>
</reference>
<protein>
    <recommendedName>
        <fullName evidence="1">Xanthine phosphoribosyltransferase</fullName>
        <shortName evidence="1">XPRTase</shortName>
        <ecNumber evidence="1">2.4.2.22</ecNumber>
    </recommendedName>
</protein>
<dbReference type="EC" id="2.4.2.22" evidence="1"/>
<dbReference type="EMBL" id="CP000001">
    <property type="protein sequence ID" value="AAU18802.1"/>
    <property type="molecule type" value="Genomic_DNA"/>
</dbReference>
<dbReference type="RefSeq" id="WP_000866493.1">
    <property type="nucleotide sequence ID" value="NZ_CP009968.1"/>
</dbReference>
<dbReference type="SMR" id="Q63DG7"/>
<dbReference type="KEGG" id="bcz:BCE33L1448"/>
<dbReference type="PATRIC" id="fig|288681.22.peg.4103"/>
<dbReference type="UniPathway" id="UPA00602">
    <property type="reaction ID" value="UER00658"/>
</dbReference>
<dbReference type="Proteomes" id="UP000002612">
    <property type="component" value="Chromosome"/>
</dbReference>
<dbReference type="GO" id="GO:0005737">
    <property type="term" value="C:cytoplasm"/>
    <property type="evidence" value="ECO:0007669"/>
    <property type="project" value="UniProtKB-SubCell"/>
</dbReference>
<dbReference type="GO" id="GO:0000310">
    <property type="term" value="F:xanthine phosphoribosyltransferase activity"/>
    <property type="evidence" value="ECO:0007669"/>
    <property type="project" value="UniProtKB-UniRule"/>
</dbReference>
<dbReference type="GO" id="GO:0006166">
    <property type="term" value="P:purine ribonucleoside salvage"/>
    <property type="evidence" value="ECO:0007669"/>
    <property type="project" value="UniProtKB-KW"/>
</dbReference>
<dbReference type="GO" id="GO:0046110">
    <property type="term" value="P:xanthine metabolic process"/>
    <property type="evidence" value="ECO:0007669"/>
    <property type="project" value="InterPro"/>
</dbReference>
<dbReference type="GO" id="GO:0032265">
    <property type="term" value="P:XMP salvage"/>
    <property type="evidence" value="ECO:0007669"/>
    <property type="project" value="UniProtKB-UniRule"/>
</dbReference>
<dbReference type="CDD" id="cd06223">
    <property type="entry name" value="PRTases_typeI"/>
    <property type="match status" value="1"/>
</dbReference>
<dbReference type="Gene3D" id="3.40.50.2020">
    <property type="match status" value="1"/>
</dbReference>
<dbReference type="HAMAP" id="MF_01184">
    <property type="entry name" value="XPRTase"/>
    <property type="match status" value="1"/>
</dbReference>
<dbReference type="InterPro" id="IPR000836">
    <property type="entry name" value="PRibTrfase_dom"/>
</dbReference>
<dbReference type="InterPro" id="IPR029057">
    <property type="entry name" value="PRTase-like"/>
</dbReference>
<dbReference type="InterPro" id="IPR050118">
    <property type="entry name" value="Pur/Pyrimidine_PRTase"/>
</dbReference>
<dbReference type="InterPro" id="IPR010079">
    <property type="entry name" value="Xanthine_PRibTrfase"/>
</dbReference>
<dbReference type="NCBIfam" id="NF006671">
    <property type="entry name" value="PRK09219.1"/>
    <property type="match status" value="1"/>
</dbReference>
<dbReference type="NCBIfam" id="TIGR01744">
    <property type="entry name" value="XPRTase"/>
    <property type="match status" value="1"/>
</dbReference>
<dbReference type="PANTHER" id="PTHR43864">
    <property type="entry name" value="HYPOXANTHINE/GUANINE PHOSPHORIBOSYLTRANSFERASE"/>
    <property type="match status" value="1"/>
</dbReference>
<dbReference type="PANTHER" id="PTHR43864:SF1">
    <property type="entry name" value="XANTHINE PHOSPHORIBOSYLTRANSFERASE"/>
    <property type="match status" value="1"/>
</dbReference>
<dbReference type="Pfam" id="PF00156">
    <property type="entry name" value="Pribosyltran"/>
    <property type="match status" value="1"/>
</dbReference>
<dbReference type="SUPFAM" id="SSF53271">
    <property type="entry name" value="PRTase-like"/>
    <property type="match status" value="1"/>
</dbReference>
<name>XPT_BACCZ</name>
<organism>
    <name type="scientific">Bacillus cereus (strain ZK / E33L)</name>
    <dbReference type="NCBI Taxonomy" id="288681"/>
    <lineage>
        <taxon>Bacteria</taxon>
        <taxon>Bacillati</taxon>
        <taxon>Bacillota</taxon>
        <taxon>Bacilli</taxon>
        <taxon>Bacillales</taxon>
        <taxon>Bacillaceae</taxon>
        <taxon>Bacillus</taxon>
        <taxon>Bacillus cereus group</taxon>
    </lineage>
</organism>